<proteinExistence type="inferred from homology"/>
<accession>Q821X8</accession>
<organism>
    <name type="scientific">Chlamydia caviae (strain ATCC VR-813 / DSM 19441 / 03DC25 / GPIC)</name>
    <name type="common">Chlamydophila caviae</name>
    <dbReference type="NCBI Taxonomy" id="227941"/>
    <lineage>
        <taxon>Bacteria</taxon>
        <taxon>Pseudomonadati</taxon>
        <taxon>Chlamydiota</taxon>
        <taxon>Chlamydiia</taxon>
        <taxon>Chlamydiales</taxon>
        <taxon>Chlamydiaceae</taxon>
        <taxon>Chlamydia/Chlamydophila group</taxon>
        <taxon>Chlamydia</taxon>
    </lineage>
</organism>
<keyword id="KW-0963">Cytoplasm</keyword>
<keyword id="KW-0444">Lipid biosynthesis</keyword>
<keyword id="KW-0443">Lipid metabolism</keyword>
<keyword id="KW-0594">Phospholipid biosynthesis</keyword>
<keyword id="KW-1208">Phospholipid metabolism</keyword>
<keyword id="KW-0808">Transferase</keyword>
<name>PLSX_CHLCV</name>
<protein>
    <recommendedName>
        <fullName evidence="1">Phosphate acyltransferase</fullName>
        <ecNumber evidence="1">2.3.1.274</ecNumber>
    </recommendedName>
    <alternativeName>
        <fullName evidence="1">Acyl-ACP phosphotransacylase</fullName>
    </alternativeName>
    <alternativeName>
        <fullName evidence="1">Acyl-[acyl-carrier-protein]--phosphate acyltransferase</fullName>
    </alternativeName>
    <alternativeName>
        <fullName evidence="1">Phosphate-acyl-ACP acyltransferase</fullName>
    </alternativeName>
</protein>
<feature type="chain" id="PRO_0000189862" description="Phosphate acyltransferase">
    <location>
        <begin position="1"/>
        <end position="316"/>
    </location>
</feature>
<reference key="1">
    <citation type="journal article" date="2003" name="Nucleic Acids Res.">
        <title>Genome sequence of Chlamydophila caviae (Chlamydia psittaci GPIC): examining the role of niche-specific genes in the evolution of the Chlamydiaceae.</title>
        <authorList>
            <person name="Read T.D."/>
            <person name="Myers G.S.A."/>
            <person name="Brunham R.C."/>
            <person name="Nelson W.C."/>
            <person name="Paulsen I.T."/>
            <person name="Heidelberg J.F."/>
            <person name="Holtzapple E.K."/>
            <person name="Khouri H.M."/>
            <person name="Federova N.B."/>
            <person name="Carty H.A."/>
            <person name="Umayam L.A."/>
            <person name="Haft D.H."/>
            <person name="Peterson J.D."/>
            <person name="Beanan M.J."/>
            <person name="White O."/>
            <person name="Salzberg S.L."/>
            <person name="Hsia R.-C."/>
            <person name="McClarty G."/>
            <person name="Rank R.G."/>
            <person name="Bavoil P.M."/>
            <person name="Fraser C.M."/>
        </authorList>
    </citation>
    <scope>NUCLEOTIDE SEQUENCE [LARGE SCALE GENOMIC DNA]</scope>
    <source>
        <strain>ATCC VR-813 / DSM 19441 / 03DC25 / GPIC</strain>
    </source>
</reference>
<sequence length="316" mass="34364">MNVQIGIDLMGGDHSPLVIWEVLIDVLNSRASNSHISFIAFASREVKEQILSSYTHKEYPEIIASESFVAMDDSPLAAIRKKSSSMALGLDYLKEDKIDAFISTGNTAALITLSRAKIPVFPTVRRPALLVRVPTMRGCAVILDVGANVSVNPEEMLGFARMGLAYRQCLGKAECPTIGLLNIGSEERKGTEAHRQTYRILKETFQDAFLGNIESGDVFGGSVDIVVADGFTGNIFLKTAEGVFDFLRHILGDKLESDVTRHLDYTIYPGSMVCGLSKLVIKCHGKACGKSLFNGISGSIDLARARVCERILSSLS</sequence>
<comment type="function">
    <text evidence="1">Catalyzes the reversible formation of acyl-phosphate (acyl-PO(4)) from acyl-[acyl-carrier-protein] (acyl-ACP). This enzyme utilizes acyl-ACP as fatty acyl donor, but not acyl-CoA.</text>
</comment>
<comment type="catalytic activity">
    <reaction evidence="1">
        <text>a fatty acyl-[ACP] + phosphate = an acyl phosphate + holo-[ACP]</text>
        <dbReference type="Rhea" id="RHEA:42292"/>
        <dbReference type="Rhea" id="RHEA-COMP:9685"/>
        <dbReference type="Rhea" id="RHEA-COMP:14125"/>
        <dbReference type="ChEBI" id="CHEBI:43474"/>
        <dbReference type="ChEBI" id="CHEBI:59918"/>
        <dbReference type="ChEBI" id="CHEBI:64479"/>
        <dbReference type="ChEBI" id="CHEBI:138651"/>
        <dbReference type="EC" id="2.3.1.274"/>
    </reaction>
</comment>
<comment type="pathway">
    <text evidence="1">Lipid metabolism; phospholipid metabolism.</text>
</comment>
<comment type="subunit">
    <text evidence="1">Homodimer. Probably interacts with PlsY.</text>
</comment>
<comment type="subcellular location">
    <subcellularLocation>
        <location evidence="1">Cytoplasm</location>
    </subcellularLocation>
    <text evidence="1">Associated with the membrane possibly through PlsY.</text>
</comment>
<comment type="similarity">
    <text evidence="1">Belongs to the PlsX family.</text>
</comment>
<evidence type="ECO:0000255" key="1">
    <source>
        <dbReference type="HAMAP-Rule" id="MF_00019"/>
    </source>
</evidence>
<gene>
    <name evidence="1" type="primary">plsX</name>
    <name type="ordered locus">CCA_00807</name>
</gene>
<dbReference type="EC" id="2.3.1.274" evidence="1"/>
<dbReference type="EMBL" id="AE015925">
    <property type="protein sequence ID" value="AAP05548.1"/>
    <property type="molecule type" value="Genomic_DNA"/>
</dbReference>
<dbReference type="RefSeq" id="WP_011006762.1">
    <property type="nucleotide sequence ID" value="NC_003361.3"/>
</dbReference>
<dbReference type="SMR" id="Q821X8"/>
<dbReference type="STRING" id="227941.CCA_00807"/>
<dbReference type="KEGG" id="cca:CCA_00807"/>
<dbReference type="eggNOG" id="COG0416">
    <property type="taxonomic scope" value="Bacteria"/>
</dbReference>
<dbReference type="HOGENOM" id="CLU_039379_1_0_0"/>
<dbReference type="OrthoDB" id="9806408at2"/>
<dbReference type="UniPathway" id="UPA00085"/>
<dbReference type="Proteomes" id="UP000002193">
    <property type="component" value="Chromosome"/>
</dbReference>
<dbReference type="GO" id="GO:0005737">
    <property type="term" value="C:cytoplasm"/>
    <property type="evidence" value="ECO:0007669"/>
    <property type="project" value="UniProtKB-SubCell"/>
</dbReference>
<dbReference type="GO" id="GO:0043811">
    <property type="term" value="F:phosphate:acyl-[acyl carrier protein] acyltransferase activity"/>
    <property type="evidence" value="ECO:0007669"/>
    <property type="project" value="UniProtKB-UniRule"/>
</dbReference>
<dbReference type="GO" id="GO:0006633">
    <property type="term" value="P:fatty acid biosynthetic process"/>
    <property type="evidence" value="ECO:0007669"/>
    <property type="project" value="UniProtKB-UniRule"/>
</dbReference>
<dbReference type="GO" id="GO:0008654">
    <property type="term" value="P:phospholipid biosynthetic process"/>
    <property type="evidence" value="ECO:0007669"/>
    <property type="project" value="UniProtKB-KW"/>
</dbReference>
<dbReference type="Gene3D" id="3.40.718.10">
    <property type="entry name" value="Isopropylmalate Dehydrogenase"/>
    <property type="match status" value="1"/>
</dbReference>
<dbReference type="HAMAP" id="MF_00019">
    <property type="entry name" value="PlsX"/>
    <property type="match status" value="1"/>
</dbReference>
<dbReference type="InterPro" id="IPR003664">
    <property type="entry name" value="FA_synthesis"/>
</dbReference>
<dbReference type="InterPro" id="IPR012281">
    <property type="entry name" value="Phospholipid_synth_PlsX-like"/>
</dbReference>
<dbReference type="NCBIfam" id="NF010420">
    <property type="entry name" value="PRK13846.1"/>
    <property type="match status" value="1"/>
</dbReference>
<dbReference type="PANTHER" id="PTHR30100">
    <property type="entry name" value="FATTY ACID/PHOSPHOLIPID SYNTHESIS PROTEIN PLSX"/>
    <property type="match status" value="1"/>
</dbReference>
<dbReference type="PANTHER" id="PTHR30100:SF1">
    <property type="entry name" value="PHOSPHATE ACYLTRANSFERASE"/>
    <property type="match status" value="1"/>
</dbReference>
<dbReference type="Pfam" id="PF02504">
    <property type="entry name" value="FA_synthesis"/>
    <property type="match status" value="1"/>
</dbReference>
<dbReference type="PIRSF" id="PIRSF002465">
    <property type="entry name" value="Phsphlp_syn_PlsX"/>
    <property type="match status" value="1"/>
</dbReference>
<dbReference type="SUPFAM" id="SSF53659">
    <property type="entry name" value="Isocitrate/Isopropylmalate dehydrogenase-like"/>
    <property type="match status" value="1"/>
</dbReference>